<gene>
    <name type="primary">MT-CYB</name>
    <name type="synonym">COB</name>
    <name type="synonym">CYTB</name>
    <name type="synonym">MTCYB</name>
</gene>
<feature type="chain" id="PRO_0000061522" description="Cytochrome b">
    <location>
        <begin position="1"/>
        <end position="379"/>
    </location>
</feature>
<feature type="transmembrane region" description="Helical" evidence="2">
    <location>
        <begin position="33"/>
        <end position="53"/>
    </location>
</feature>
<feature type="transmembrane region" description="Helical" evidence="2">
    <location>
        <begin position="77"/>
        <end position="98"/>
    </location>
</feature>
<feature type="transmembrane region" description="Helical" evidence="2">
    <location>
        <begin position="113"/>
        <end position="133"/>
    </location>
</feature>
<feature type="transmembrane region" description="Helical" evidence="2">
    <location>
        <begin position="178"/>
        <end position="198"/>
    </location>
</feature>
<feature type="transmembrane region" description="Helical" evidence="2">
    <location>
        <begin position="226"/>
        <end position="246"/>
    </location>
</feature>
<feature type="transmembrane region" description="Helical" evidence="2">
    <location>
        <begin position="288"/>
        <end position="308"/>
    </location>
</feature>
<feature type="transmembrane region" description="Helical" evidence="2">
    <location>
        <begin position="320"/>
        <end position="340"/>
    </location>
</feature>
<feature type="transmembrane region" description="Helical" evidence="2">
    <location>
        <begin position="347"/>
        <end position="367"/>
    </location>
</feature>
<feature type="binding site" description="axial binding residue" evidence="2">
    <location>
        <position position="83"/>
    </location>
    <ligand>
        <name>heme b</name>
        <dbReference type="ChEBI" id="CHEBI:60344"/>
        <label>b562</label>
    </ligand>
    <ligandPart>
        <name>Fe</name>
        <dbReference type="ChEBI" id="CHEBI:18248"/>
    </ligandPart>
</feature>
<feature type="binding site" description="axial binding residue" evidence="2">
    <location>
        <position position="97"/>
    </location>
    <ligand>
        <name>heme b</name>
        <dbReference type="ChEBI" id="CHEBI:60344"/>
        <label>b566</label>
    </ligand>
    <ligandPart>
        <name>Fe</name>
        <dbReference type="ChEBI" id="CHEBI:18248"/>
    </ligandPart>
</feature>
<feature type="binding site" description="axial binding residue" evidence="2">
    <location>
        <position position="182"/>
    </location>
    <ligand>
        <name>heme b</name>
        <dbReference type="ChEBI" id="CHEBI:60344"/>
        <label>b562</label>
    </ligand>
    <ligandPart>
        <name>Fe</name>
        <dbReference type="ChEBI" id="CHEBI:18248"/>
    </ligandPart>
</feature>
<feature type="binding site" description="axial binding residue" evidence="2">
    <location>
        <position position="196"/>
    </location>
    <ligand>
        <name>heme b</name>
        <dbReference type="ChEBI" id="CHEBI:60344"/>
        <label>b566</label>
    </ligand>
    <ligandPart>
        <name>Fe</name>
        <dbReference type="ChEBI" id="CHEBI:18248"/>
    </ligandPart>
</feature>
<feature type="binding site" evidence="2">
    <location>
        <position position="201"/>
    </location>
    <ligand>
        <name>a ubiquinone</name>
        <dbReference type="ChEBI" id="CHEBI:16389"/>
    </ligand>
</feature>
<name>CYB_SCAAQ</name>
<protein>
    <recommendedName>
        <fullName>Cytochrome b</fullName>
    </recommendedName>
    <alternativeName>
        <fullName>Complex III subunit 3</fullName>
    </alternativeName>
    <alternativeName>
        <fullName>Complex III subunit III</fullName>
    </alternativeName>
    <alternativeName>
        <fullName>Cytochrome b-c1 complex subunit 3</fullName>
    </alternativeName>
    <alternativeName>
        <fullName>Ubiquinol-cytochrome-c reductase complex cytochrome b subunit</fullName>
    </alternativeName>
</protein>
<reference key="1">
    <citation type="journal article" date="2003" name="Nature">
        <title>Single origin of Malagasy Carnivora from an African ancestor.</title>
        <authorList>
            <person name="Yoder A.D."/>
            <person name="Burns M.M."/>
            <person name="Zehr S."/>
            <person name="Delefosse T."/>
            <person name="Veron G."/>
            <person name="Goodman S.M."/>
            <person name="Flynn J.J."/>
        </authorList>
    </citation>
    <scope>NUCLEOTIDE SEQUENCE [GENOMIC DNA]</scope>
</reference>
<accession>Q85PM6</accession>
<geneLocation type="mitochondrion"/>
<organism>
    <name type="scientific">Scalopus aquaticus</name>
    <name type="common">Eastern mole</name>
    <name type="synonym">Sorex aquaticus</name>
    <dbReference type="NCBI Taxonomy" id="71119"/>
    <lineage>
        <taxon>Eukaryota</taxon>
        <taxon>Metazoa</taxon>
        <taxon>Chordata</taxon>
        <taxon>Craniata</taxon>
        <taxon>Vertebrata</taxon>
        <taxon>Euteleostomi</taxon>
        <taxon>Mammalia</taxon>
        <taxon>Eutheria</taxon>
        <taxon>Laurasiatheria</taxon>
        <taxon>Eulipotyphla</taxon>
        <taxon>Talpidae</taxon>
        <taxon>Scalopus</taxon>
    </lineage>
</organism>
<keyword id="KW-0249">Electron transport</keyword>
<keyword id="KW-0349">Heme</keyword>
<keyword id="KW-0408">Iron</keyword>
<keyword id="KW-0472">Membrane</keyword>
<keyword id="KW-0479">Metal-binding</keyword>
<keyword id="KW-0496">Mitochondrion</keyword>
<keyword id="KW-0999">Mitochondrion inner membrane</keyword>
<keyword id="KW-0679">Respiratory chain</keyword>
<keyword id="KW-0812">Transmembrane</keyword>
<keyword id="KW-1133">Transmembrane helix</keyword>
<keyword id="KW-0813">Transport</keyword>
<keyword id="KW-0830">Ubiquinone</keyword>
<evidence type="ECO:0000250" key="1"/>
<evidence type="ECO:0000250" key="2">
    <source>
        <dbReference type="UniProtKB" id="P00157"/>
    </source>
</evidence>
<evidence type="ECO:0000255" key="3">
    <source>
        <dbReference type="PROSITE-ProRule" id="PRU00967"/>
    </source>
</evidence>
<evidence type="ECO:0000255" key="4">
    <source>
        <dbReference type="PROSITE-ProRule" id="PRU00968"/>
    </source>
</evidence>
<proteinExistence type="inferred from homology"/>
<sequence length="379" mass="42565">MTNIRKAHPLIKIINNSFIDLPTPSNISSWWNFGSLLGICLILQILTGLFLAMHYTSDTMTAFSSVTHICRDVNYGWLIRYMHANGASMFFICLFLHVGRGLYYGSYMFKETWNIGVLLLFAVMATAFMGYVLPWGQMSFWGATVITNLLSAIPYIGTDLVEWIWGGFSVDKATLTRLFAFHFILPFIVAALAGVHLLFLHETGSNNPSGLPSDSDKIPFHPYYTIKDILGALIMLLALLSLTLFSPDLLGDPDNYIPANPLNTPPHIKPEWYFLFAYAILRSIPNKLGGVLALVLSILVLALMPLLHTSKQRTMMFRPISQCLFWLLVADLFTLTWIGGQPVEHPFIIIGQLASILYFALILVLMPIASLLENNLLKW</sequence>
<dbReference type="EMBL" id="AY170116">
    <property type="protein sequence ID" value="AAN85635.1"/>
    <property type="molecule type" value="Genomic_DNA"/>
</dbReference>
<dbReference type="SMR" id="Q85PM6"/>
<dbReference type="GO" id="GO:0005743">
    <property type="term" value="C:mitochondrial inner membrane"/>
    <property type="evidence" value="ECO:0007669"/>
    <property type="project" value="UniProtKB-SubCell"/>
</dbReference>
<dbReference type="GO" id="GO:0045275">
    <property type="term" value="C:respiratory chain complex III"/>
    <property type="evidence" value="ECO:0007669"/>
    <property type="project" value="InterPro"/>
</dbReference>
<dbReference type="GO" id="GO:0046872">
    <property type="term" value="F:metal ion binding"/>
    <property type="evidence" value="ECO:0007669"/>
    <property type="project" value="UniProtKB-KW"/>
</dbReference>
<dbReference type="GO" id="GO:0008121">
    <property type="term" value="F:ubiquinol-cytochrome-c reductase activity"/>
    <property type="evidence" value="ECO:0007669"/>
    <property type="project" value="InterPro"/>
</dbReference>
<dbReference type="GO" id="GO:0006122">
    <property type="term" value="P:mitochondrial electron transport, ubiquinol to cytochrome c"/>
    <property type="evidence" value="ECO:0007669"/>
    <property type="project" value="TreeGrafter"/>
</dbReference>
<dbReference type="CDD" id="cd00290">
    <property type="entry name" value="cytochrome_b_C"/>
    <property type="match status" value="1"/>
</dbReference>
<dbReference type="CDD" id="cd00284">
    <property type="entry name" value="Cytochrome_b_N"/>
    <property type="match status" value="1"/>
</dbReference>
<dbReference type="FunFam" id="1.20.810.10:FF:000002">
    <property type="entry name" value="Cytochrome b"/>
    <property type="match status" value="1"/>
</dbReference>
<dbReference type="Gene3D" id="1.20.810.10">
    <property type="entry name" value="Cytochrome Bc1 Complex, Chain C"/>
    <property type="match status" value="1"/>
</dbReference>
<dbReference type="InterPro" id="IPR005798">
    <property type="entry name" value="Cyt_b/b6_C"/>
</dbReference>
<dbReference type="InterPro" id="IPR036150">
    <property type="entry name" value="Cyt_b/b6_C_sf"/>
</dbReference>
<dbReference type="InterPro" id="IPR005797">
    <property type="entry name" value="Cyt_b/b6_N"/>
</dbReference>
<dbReference type="InterPro" id="IPR027387">
    <property type="entry name" value="Cytb/b6-like_sf"/>
</dbReference>
<dbReference type="InterPro" id="IPR030689">
    <property type="entry name" value="Cytochrome_b"/>
</dbReference>
<dbReference type="InterPro" id="IPR048260">
    <property type="entry name" value="Cytochrome_b_C_euk/bac"/>
</dbReference>
<dbReference type="InterPro" id="IPR048259">
    <property type="entry name" value="Cytochrome_b_N_euk/bac"/>
</dbReference>
<dbReference type="InterPro" id="IPR016174">
    <property type="entry name" value="Di-haem_cyt_TM"/>
</dbReference>
<dbReference type="PANTHER" id="PTHR19271">
    <property type="entry name" value="CYTOCHROME B"/>
    <property type="match status" value="1"/>
</dbReference>
<dbReference type="PANTHER" id="PTHR19271:SF16">
    <property type="entry name" value="CYTOCHROME B"/>
    <property type="match status" value="1"/>
</dbReference>
<dbReference type="Pfam" id="PF00032">
    <property type="entry name" value="Cytochrom_B_C"/>
    <property type="match status" value="1"/>
</dbReference>
<dbReference type="Pfam" id="PF00033">
    <property type="entry name" value="Cytochrome_B"/>
    <property type="match status" value="1"/>
</dbReference>
<dbReference type="PIRSF" id="PIRSF038885">
    <property type="entry name" value="COB"/>
    <property type="match status" value="1"/>
</dbReference>
<dbReference type="SUPFAM" id="SSF81648">
    <property type="entry name" value="a domain/subunit of cytochrome bc1 complex (Ubiquinol-cytochrome c reductase)"/>
    <property type="match status" value="1"/>
</dbReference>
<dbReference type="SUPFAM" id="SSF81342">
    <property type="entry name" value="Transmembrane di-heme cytochromes"/>
    <property type="match status" value="1"/>
</dbReference>
<dbReference type="PROSITE" id="PS51003">
    <property type="entry name" value="CYTB_CTER"/>
    <property type="match status" value="1"/>
</dbReference>
<dbReference type="PROSITE" id="PS51002">
    <property type="entry name" value="CYTB_NTER"/>
    <property type="match status" value="1"/>
</dbReference>
<comment type="function">
    <text evidence="2">Component of the ubiquinol-cytochrome c reductase complex (complex III or cytochrome b-c1 complex) that is part of the mitochondrial respiratory chain. The b-c1 complex mediates electron transfer from ubiquinol to cytochrome c. Contributes to the generation of a proton gradient across the mitochondrial membrane that is then used for ATP synthesis.</text>
</comment>
<comment type="cofactor">
    <cofactor evidence="2">
        <name>heme b</name>
        <dbReference type="ChEBI" id="CHEBI:60344"/>
    </cofactor>
    <text evidence="2">Binds 2 heme b groups non-covalently.</text>
</comment>
<comment type="subunit">
    <text evidence="2">The cytochrome bc1 complex contains 11 subunits: 3 respiratory subunits (MT-CYB, CYC1 and UQCRFS1), 2 core proteins (UQCRC1 and UQCRC2) and 6 low-molecular weight proteins (UQCRH/QCR6, UQCRB/QCR7, UQCRQ/QCR8, UQCR10/QCR9, UQCR11/QCR10 and a cleavage product of UQCRFS1). This cytochrome bc1 complex then forms a dimer.</text>
</comment>
<comment type="subcellular location">
    <subcellularLocation>
        <location evidence="2">Mitochondrion inner membrane</location>
        <topology evidence="2">Multi-pass membrane protein</topology>
    </subcellularLocation>
</comment>
<comment type="miscellaneous">
    <text evidence="1">Heme 1 (or BL or b562) is low-potential and absorbs at about 562 nm, and heme 2 (or BH or b566) is high-potential and absorbs at about 566 nm.</text>
</comment>
<comment type="similarity">
    <text evidence="3 4">Belongs to the cytochrome b family.</text>
</comment>
<comment type="caution">
    <text evidence="2">The full-length protein contains only eight transmembrane helices, not nine as predicted by bioinformatics tools.</text>
</comment>